<proteinExistence type="inferred from homology"/>
<evidence type="ECO:0000250" key="1"/>
<evidence type="ECO:0000255" key="2"/>
<evidence type="ECO:0000256" key="3">
    <source>
        <dbReference type="SAM" id="MobiDB-lite"/>
    </source>
</evidence>
<evidence type="ECO:0000305" key="4"/>
<dbReference type="EMBL" id="AAFW02000099">
    <property type="protein sequence ID" value="EDN62042.1"/>
    <property type="molecule type" value="Genomic_DNA"/>
</dbReference>
<dbReference type="SMR" id="A6ZUA4"/>
<dbReference type="HOGENOM" id="CLU_069890_0_0_1"/>
<dbReference type="Proteomes" id="UP000007060">
    <property type="component" value="Unassembled WGS sequence"/>
</dbReference>
<dbReference type="GO" id="GO:0005737">
    <property type="term" value="C:cytoplasm"/>
    <property type="evidence" value="ECO:0007669"/>
    <property type="project" value="UniProtKB-KW"/>
</dbReference>
<dbReference type="GO" id="GO:0031965">
    <property type="term" value="C:nuclear membrane"/>
    <property type="evidence" value="ECO:0007669"/>
    <property type="project" value="UniProtKB-SubCell"/>
</dbReference>
<dbReference type="GO" id="GO:0005816">
    <property type="term" value="C:spindle pole body"/>
    <property type="evidence" value="ECO:0007669"/>
    <property type="project" value="UniProtKB-SubCell"/>
</dbReference>
<dbReference type="GO" id="GO:0071988">
    <property type="term" value="P:protein localization to spindle pole body"/>
    <property type="evidence" value="ECO:0007669"/>
    <property type="project" value="InterPro"/>
</dbReference>
<dbReference type="GO" id="GO:0030474">
    <property type="term" value="P:spindle pole body duplication"/>
    <property type="evidence" value="ECO:0007669"/>
    <property type="project" value="InterPro"/>
</dbReference>
<dbReference type="InterPro" id="IPR031433">
    <property type="entry name" value="Mps2"/>
</dbReference>
<dbReference type="Pfam" id="PF17060">
    <property type="entry name" value="MPS2"/>
    <property type="match status" value="1"/>
</dbReference>
<name>MPS2_YEAS7</name>
<feature type="chain" id="PRO_0000409161" description="Monopolar spindle protein 2">
    <location>
        <begin position="1"/>
        <end position="387"/>
    </location>
</feature>
<feature type="transmembrane region" description="Helical" evidence="2">
    <location>
        <begin position="311"/>
        <end position="327"/>
    </location>
</feature>
<feature type="region of interest" description="Disordered" evidence="3">
    <location>
        <begin position="216"/>
        <end position="235"/>
    </location>
</feature>
<feature type="coiled-coil region" evidence="2">
    <location>
        <begin position="157"/>
        <end position="269"/>
    </location>
</feature>
<feature type="compositionally biased region" description="Polar residues" evidence="3">
    <location>
        <begin position="220"/>
        <end position="230"/>
    </location>
</feature>
<reference key="1">
    <citation type="journal article" date="2007" name="Proc. Natl. Acad. Sci. U.S.A.">
        <title>Genome sequencing and comparative analysis of Saccharomyces cerevisiae strain YJM789.</title>
        <authorList>
            <person name="Wei W."/>
            <person name="McCusker J.H."/>
            <person name="Hyman R.W."/>
            <person name="Jones T."/>
            <person name="Ning Y."/>
            <person name="Cao Z."/>
            <person name="Gu Z."/>
            <person name="Bruno D."/>
            <person name="Miranda M."/>
            <person name="Nguyen M."/>
            <person name="Wilhelmy J."/>
            <person name="Komp C."/>
            <person name="Tamse R."/>
            <person name="Wang X."/>
            <person name="Jia P."/>
            <person name="Luedi P."/>
            <person name="Oefner P.J."/>
            <person name="David L."/>
            <person name="Dietrich F.S."/>
            <person name="Li Y."/>
            <person name="Davis R.W."/>
            <person name="Steinmetz L.M."/>
        </authorList>
    </citation>
    <scope>NUCLEOTIDE SEQUENCE [LARGE SCALE GENOMIC DNA]</scope>
    <source>
        <strain>YJM789</strain>
    </source>
</reference>
<gene>
    <name type="primary">MPS2</name>
    <name type="synonym">MMC1</name>
    <name type="ORF">SCY_1987</name>
</gene>
<organism>
    <name type="scientific">Saccharomyces cerevisiae (strain YJM789)</name>
    <name type="common">Baker's yeast</name>
    <dbReference type="NCBI Taxonomy" id="307796"/>
    <lineage>
        <taxon>Eukaryota</taxon>
        <taxon>Fungi</taxon>
        <taxon>Dikarya</taxon>
        <taxon>Ascomycota</taxon>
        <taxon>Saccharomycotina</taxon>
        <taxon>Saccharomycetes</taxon>
        <taxon>Saccharomycetales</taxon>
        <taxon>Saccharomycetaceae</taxon>
        <taxon>Saccharomyces</taxon>
    </lineage>
</organism>
<accession>A6ZUA4</accession>
<keyword id="KW-0175">Coiled coil</keyword>
<keyword id="KW-0963">Cytoplasm</keyword>
<keyword id="KW-0206">Cytoskeleton</keyword>
<keyword id="KW-0472">Membrane</keyword>
<keyword id="KW-0539">Nucleus</keyword>
<keyword id="KW-0812">Transmembrane</keyword>
<keyword id="KW-1133">Transmembrane helix</keyword>
<protein>
    <recommendedName>
        <fullName>Monopolar spindle protein 2</fullName>
    </recommendedName>
</protein>
<comment type="function">
    <text evidence="1">Component of the spindle pole body (SPB) required for insertion of the nascent SPB into the nuclear envelope and for the proper execution of spindle pole body (SPB) duplication.</text>
</comment>
<comment type="subunit">
    <text evidence="1">Interacts with BBP1, MPS3, and SPC24.</text>
</comment>
<comment type="subcellular location">
    <subcellularLocation>
        <location evidence="1">Nucleus membrane</location>
        <topology evidence="1">Single-pass membrane protein</topology>
    </subcellularLocation>
    <subcellularLocation>
        <location evidence="1">Cytoplasm</location>
        <location evidence="1">Cytoskeleton</location>
        <location evidence="1">Microtubule organizing center</location>
        <location evidence="1">Spindle pole body</location>
    </subcellularLocation>
</comment>
<comment type="similarity">
    <text evidence="4">Belongs to the MPS2 family.</text>
</comment>
<sequence>MSNGAFDAIFEYAWGQIDKPISGDFIYGKDLPKLIEIIENIFQKAQKSGSYELRLPLFSEINKDLFRTFSNTKTFFKIHKEEFDDIFFNLVNHPLREILENAFIGVDSIPSDFIVSMNLNSPSKFLVENKSKNTEGAGISTPRKKLTESPIKLLSRNNIGKALEVQVEELKRELTAKQSLLQENERQVSELKIRLETYQEKYASIQQRFSDLQKARQVEDNQNSSRTSDPGSPLVTGIDQKAILEEFRRRLQRQTDTISFLKDQIRRERGLNCSNDKVSHSKRKHATTDGDGTFKNFISAVPSNIWVKATIRIIVCFALLAGVLPYIRKYVYAHDTPSQNSRLQLSWWENSGILSKIVWFFEDQTDLETEYRSNANVDDAYSRVFGI</sequence>